<evidence type="ECO:0000255" key="1">
    <source>
        <dbReference type="HAMAP-Rule" id="MF_01646"/>
    </source>
</evidence>
<accession>Q48H75</accession>
<sequence length="464" mass="50022">MEFLPLFHNLRGSRVLVVGGGEIALRKSRLIADAGAVLRVVAPEIEAQLSELVVQSGGEMILRGYSESDLDGCVLIIAATDDEPLNAQVSHDARLRCVPVNVVDAPALCTVIFPAIVDRSPLVIAVSSGGDAPVLARLIRAKLETWIPSTYGQLAGLAARFRNQVKGLFPNVQQRRAFWEDVFQGAIADRQLAGQGAEAERLLIAKIAGEPPPETGEVYLVGAGPGDPDLLTFRALRLMQQADVVLYDRLVAPTILDLCRRDAERVYVGKRRAEHAVPQEQINQQLVALAKQGKRVVRLKGGDPFIFGRGGEEIEELAVHGIPFQVVPGITAASGCAAYAGIPLTHRDHAQSVRFITGHLKDGTTDLPWSDLVAPAQTLVFYMGLIGLPVICEELIRHGRSADTPAALVQQGTTVNQRVFTGTLANLPQLVAEHEVHAPTLVIIGEVVKLREKLAWFEGAQATV</sequence>
<comment type="function">
    <text evidence="1">Multifunctional enzyme that catalyzes the SAM-dependent methylations of uroporphyrinogen III at position C-2 and C-7 to form precorrin-2 via precorrin-1. Then it catalyzes the NAD-dependent ring dehydrogenation of precorrin-2 to yield sirohydrochlorin. Finally, it catalyzes the ferrochelation of sirohydrochlorin to yield siroheme.</text>
</comment>
<comment type="catalytic activity">
    <reaction evidence="1">
        <text>uroporphyrinogen III + 2 S-adenosyl-L-methionine = precorrin-2 + 2 S-adenosyl-L-homocysteine + H(+)</text>
        <dbReference type="Rhea" id="RHEA:32459"/>
        <dbReference type="ChEBI" id="CHEBI:15378"/>
        <dbReference type="ChEBI" id="CHEBI:57308"/>
        <dbReference type="ChEBI" id="CHEBI:57856"/>
        <dbReference type="ChEBI" id="CHEBI:58827"/>
        <dbReference type="ChEBI" id="CHEBI:59789"/>
        <dbReference type="EC" id="2.1.1.107"/>
    </reaction>
</comment>
<comment type="catalytic activity">
    <reaction evidence="1">
        <text>precorrin-2 + NAD(+) = sirohydrochlorin + NADH + 2 H(+)</text>
        <dbReference type="Rhea" id="RHEA:15613"/>
        <dbReference type="ChEBI" id="CHEBI:15378"/>
        <dbReference type="ChEBI" id="CHEBI:57540"/>
        <dbReference type="ChEBI" id="CHEBI:57945"/>
        <dbReference type="ChEBI" id="CHEBI:58351"/>
        <dbReference type="ChEBI" id="CHEBI:58827"/>
        <dbReference type="EC" id="1.3.1.76"/>
    </reaction>
</comment>
<comment type="catalytic activity">
    <reaction evidence="1">
        <text>siroheme + 2 H(+) = sirohydrochlorin + Fe(2+)</text>
        <dbReference type="Rhea" id="RHEA:24360"/>
        <dbReference type="ChEBI" id="CHEBI:15378"/>
        <dbReference type="ChEBI" id="CHEBI:29033"/>
        <dbReference type="ChEBI" id="CHEBI:58351"/>
        <dbReference type="ChEBI" id="CHEBI:60052"/>
        <dbReference type="EC" id="4.99.1.4"/>
    </reaction>
</comment>
<comment type="pathway">
    <text evidence="1">Cofactor biosynthesis; adenosylcobalamin biosynthesis; precorrin-2 from uroporphyrinogen III: step 1/1.</text>
</comment>
<comment type="pathway">
    <text evidence="1">Cofactor biosynthesis; adenosylcobalamin biosynthesis; sirohydrochlorin from precorrin-2: step 1/1.</text>
</comment>
<comment type="pathway">
    <text evidence="1">Porphyrin-containing compound metabolism; siroheme biosynthesis; precorrin-2 from uroporphyrinogen III: step 1/1.</text>
</comment>
<comment type="pathway">
    <text evidence="1">Porphyrin-containing compound metabolism; siroheme biosynthesis; siroheme from sirohydrochlorin: step 1/1.</text>
</comment>
<comment type="pathway">
    <text evidence="1">Porphyrin-containing compound metabolism; siroheme biosynthesis; sirohydrochlorin from precorrin-2: step 1/1.</text>
</comment>
<comment type="similarity">
    <text evidence="1">In the N-terminal section; belongs to the precorrin-2 dehydrogenase / sirohydrochlorin ferrochelatase family.</text>
</comment>
<comment type="similarity">
    <text evidence="1">In the C-terminal section; belongs to the precorrin methyltransferase family.</text>
</comment>
<organism>
    <name type="scientific">Pseudomonas savastanoi pv. phaseolicola (strain 1448A / Race 6)</name>
    <name type="common">Pseudomonas syringae pv. phaseolicola (strain 1448A / Race 6)</name>
    <dbReference type="NCBI Taxonomy" id="264730"/>
    <lineage>
        <taxon>Bacteria</taxon>
        <taxon>Pseudomonadati</taxon>
        <taxon>Pseudomonadota</taxon>
        <taxon>Gammaproteobacteria</taxon>
        <taxon>Pseudomonadales</taxon>
        <taxon>Pseudomonadaceae</taxon>
        <taxon>Pseudomonas</taxon>
    </lineage>
</organism>
<protein>
    <recommendedName>
        <fullName evidence="1">Siroheme synthase</fullName>
    </recommendedName>
    <domain>
        <recommendedName>
            <fullName evidence="1">Uroporphyrinogen-III C-methyltransferase</fullName>
            <shortName evidence="1">Urogen III methylase</shortName>
            <ecNumber evidence="1">2.1.1.107</ecNumber>
        </recommendedName>
        <alternativeName>
            <fullName evidence="1">SUMT</fullName>
        </alternativeName>
        <alternativeName>
            <fullName evidence="1">Uroporphyrinogen III methylase</fullName>
            <shortName evidence="1">UROM</shortName>
        </alternativeName>
    </domain>
    <domain>
        <recommendedName>
            <fullName evidence="1">Precorrin-2 dehydrogenase</fullName>
            <ecNumber evidence="1">1.3.1.76</ecNumber>
        </recommendedName>
    </domain>
    <domain>
        <recommendedName>
            <fullName evidence="1">Sirohydrochlorin ferrochelatase</fullName>
            <ecNumber evidence="1">4.99.1.4</ecNumber>
        </recommendedName>
    </domain>
</protein>
<dbReference type="EC" id="2.1.1.107" evidence="1"/>
<dbReference type="EC" id="1.3.1.76" evidence="1"/>
<dbReference type="EC" id="4.99.1.4" evidence="1"/>
<dbReference type="EMBL" id="CP000058">
    <property type="protein sequence ID" value="AAZ35170.1"/>
    <property type="molecule type" value="Genomic_DNA"/>
</dbReference>
<dbReference type="RefSeq" id="WP_004665685.1">
    <property type="nucleotide sequence ID" value="NC_005773.3"/>
</dbReference>
<dbReference type="SMR" id="Q48H75"/>
<dbReference type="KEGG" id="psp:PSPPH_3088"/>
<dbReference type="eggNOG" id="COG0007">
    <property type="taxonomic scope" value="Bacteria"/>
</dbReference>
<dbReference type="eggNOG" id="COG1648">
    <property type="taxonomic scope" value="Bacteria"/>
</dbReference>
<dbReference type="HOGENOM" id="CLU_011276_2_1_6"/>
<dbReference type="UniPathway" id="UPA00148">
    <property type="reaction ID" value="UER00211"/>
</dbReference>
<dbReference type="UniPathway" id="UPA00148">
    <property type="reaction ID" value="UER00222"/>
</dbReference>
<dbReference type="UniPathway" id="UPA00262">
    <property type="reaction ID" value="UER00211"/>
</dbReference>
<dbReference type="UniPathway" id="UPA00262">
    <property type="reaction ID" value="UER00222"/>
</dbReference>
<dbReference type="UniPathway" id="UPA00262">
    <property type="reaction ID" value="UER00376"/>
</dbReference>
<dbReference type="Proteomes" id="UP000000551">
    <property type="component" value="Chromosome"/>
</dbReference>
<dbReference type="GO" id="GO:0051287">
    <property type="term" value="F:NAD binding"/>
    <property type="evidence" value="ECO:0007669"/>
    <property type="project" value="InterPro"/>
</dbReference>
<dbReference type="GO" id="GO:0043115">
    <property type="term" value="F:precorrin-2 dehydrogenase activity"/>
    <property type="evidence" value="ECO:0007669"/>
    <property type="project" value="UniProtKB-UniRule"/>
</dbReference>
<dbReference type="GO" id="GO:0051266">
    <property type="term" value="F:sirohydrochlorin ferrochelatase activity"/>
    <property type="evidence" value="ECO:0007669"/>
    <property type="project" value="UniProtKB-EC"/>
</dbReference>
<dbReference type="GO" id="GO:0004851">
    <property type="term" value="F:uroporphyrin-III C-methyltransferase activity"/>
    <property type="evidence" value="ECO:0007669"/>
    <property type="project" value="UniProtKB-UniRule"/>
</dbReference>
<dbReference type="GO" id="GO:0009236">
    <property type="term" value="P:cobalamin biosynthetic process"/>
    <property type="evidence" value="ECO:0007669"/>
    <property type="project" value="UniProtKB-UniRule"/>
</dbReference>
<dbReference type="GO" id="GO:0032259">
    <property type="term" value="P:methylation"/>
    <property type="evidence" value="ECO:0007669"/>
    <property type="project" value="UniProtKB-KW"/>
</dbReference>
<dbReference type="GO" id="GO:0019354">
    <property type="term" value="P:siroheme biosynthetic process"/>
    <property type="evidence" value="ECO:0007669"/>
    <property type="project" value="UniProtKB-UniRule"/>
</dbReference>
<dbReference type="CDD" id="cd11642">
    <property type="entry name" value="SUMT"/>
    <property type="match status" value="1"/>
</dbReference>
<dbReference type="FunFam" id="3.30.160.110:FF:000001">
    <property type="entry name" value="Siroheme synthase"/>
    <property type="match status" value="1"/>
</dbReference>
<dbReference type="FunFam" id="3.30.950.10:FF:000001">
    <property type="entry name" value="Siroheme synthase"/>
    <property type="match status" value="1"/>
</dbReference>
<dbReference type="FunFam" id="3.40.1010.10:FF:000001">
    <property type="entry name" value="Siroheme synthase"/>
    <property type="match status" value="1"/>
</dbReference>
<dbReference type="Gene3D" id="3.40.1010.10">
    <property type="entry name" value="Cobalt-precorrin-4 Transmethylase, Domain 1"/>
    <property type="match status" value="1"/>
</dbReference>
<dbReference type="Gene3D" id="3.30.950.10">
    <property type="entry name" value="Methyltransferase, Cobalt-precorrin-4 Transmethylase, Domain 2"/>
    <property type="match status" value="1"/>
</dbReference>
<dbReference type="Gene3D" id="3.40.50.720">
    <property type="entry name" value="NAD(P)-binding Rossmann-like Domain"/>
    <property type="match status" value="1"/>
</dbReference>
<dbReference type="Gene3D" id="1.10.8.210">
    <property type="entry name" value="Sirohaem synthase, dimerisation domain"/>
    <property type="match status" value="1"/>
</dbReference>
<dbReference type="Gene3D" id="3.30.160.110">
    <property type="entry name" value="Siroheme synthase, domain 2"/>
    <property type="match status" value="1"/>
</dbReference>
<dbReference type="HAMAP" id="MF_01646">
    <property type="entry name" value="Siroheme_synth"/>
    <property type="match status" value="1"/>
</dbReference>
<dbReference type="InterPro" id="IPR000878">
    <property type="entry name" value="4pyrrol_Mease"/>
</dbReference>
<dbReference type="InterPro" id="IPR035996">
    <property type="entry name" value="4pyrrol_Methylase_sf"/>
</dbReference>
<dbReference type="InterPro" id="IPR014777">
    <property type="entry name" value="4pyrrole_Mease_sub1"/>
</dbReference>
<dbReference type="InterPro" id="IPR014776">
    <property type="entry name" value="4pyrrole_Mease_sub2"/>
</dbReference>
<dbReference type="InterPro" id="IPR006366">
    <property type="entry name" value="CobA/CysG_C"/>
</dbReference>
<dbReference type="InterPro" id="IPR036291">
    <property type="entry name" value="NAD(P)-bd_dom_sf"/>
</dbReference>
<dbReference type="InterPro" id="IPR050161">
    <property type="entry name" value="Siro_Cobalamin_biosynth"/>
</dbReference>
<dbReference type="InterPro" id="IPR037115">
    <property type="entry name" value="Sirohaem_synt_dimer_dom_sf"/>
</dbReference>
<dbReference type="InterPro" id="IPR012409">
    <property type="entry name" value="Sirohaem_synth"/>
</dbReference>
<dbReference type="InterPro" id="IPR028281">
    <property type="entry name" value="Sirohaem_synthase_central"/>
</dbReference>
<dbReference type="InterPro" id="IPR019478">
    <property type="entry name" value="Sirohaem_synthase_dimer_dom"/>
</dbReference>
<dbReference type="InterPro" id="IPR006367">
    <property type="entry name" value="Sirohaem_synthase_N"/>
</dbReference>
<dbReference type="InterPro" id="IPR003043">
    <property type="entry name" value="Uropor_MeTrfase_CS"/>
</dbReference>
<dbReference type="NCBIfam" id="TIGR01469">
    <property type="entry name" value="cobA_cysG_Cterm"/>
    <property type="match status" value="1"/>
</dbReference>
<dbReference type="NCBIfam" id="TIGR01470">
    <property type="entry name" value="cysG_Nterm"/>
    <property type="match status" value="1"/>
</dbReference>
<dbReference type="NCBIfam" id="NF004790">
    <property type="entry name" value="PRK06136.1"/>
    <property type="match status" value="1"/>
</dbReference>
<dbReference type="NCBIfam" id="NF007922">
    <property type="entry name" value="PRK10637.1"/>
    <property type="match status" value="1"/>
</dbReference>
<dbReference type="PANTHER" id="PTHR45790:SF1">
    <property type="entry name" value="SIROHEME SYNTHASE"/>
    <property type="match status" value="1"/>
</dbReference>
<dbReference type="PANTHER" id="PTHR45790">
    <property type="entry name" value="SIROHEME SYNTHASE-RELATED"/>
    <property type="match status" value="1"/>
</dbReference>
<dbReference type="Pfam" id="PF10414">
    <property type="entry name" value="CysG_dimeriser"/>
    <property type="match status" value="1"/>
</dbReference>
<dbReference type="Pfam" id="PF13241">
    <property type="entry name" value="NAD_binding_7"/>
    <property type="match status" value="1"/>
</dbReference>
<dbReference type="Pfam" id="PF14824">
    <property type="entry name" value="Sirohm_synth_M"/>
    <property type="match status" value="1"/>
</dbReference>
<dbReference type="Pfam" id="PF00590">
    <property type="entry name" value="TP_methylase"/>
    <property type="match status" value="1"/>
</dbReference>
<dbReference type="PIRSF" id="PIRSF036426">
    <property type="entry name" value="Sirohaem_synth"/>
    <property type="match status" value="1"/>
</dbReference>
<dbReference type="SUPFAM" id="SSF51735">
    <property type="entry name" value="NAD(P)-binding Rossmann-fold domains"/>
    <property type="match status" value="1"/>
</dbReference>
<dbReference type="SUPFAM" id="SSF75615">
    <property type="entry name" value="Siroheme synthase middle domains-like"/>
    <property type="match status" value="1"/>
</dbReference>
<dbReference type="SUPFAM" id="SSF53790">
    <property type="entry name" value="Tetrapyrrole methylase"/>
    <property type="match status" value="1"/>
</dbReference>
<dbReference type="PROSITE" id="PS00840">
    <property type="entry name" value="SUMT_2"/>
    <property type="match status" value="1"/>
</dbReference>
<name>CYSG_PSE14</name>
<keyword id="KW-0169">Cobalamin biosynthesis</keyword>
<keyword id="KW-0456">Lyase</keyword>
<keyword id="KW-0489">Methyltransferase</keyword>
<keyword id="KW-0511">Multifunctional enzyme</keyword>
<keyword id="KW-0520">NAD</keyword>
<keyword id="KW-0560">Oxidoreductase</keyword>
<keyword id="KW-0597">Phosphoprotein</keyword>
<keyword id="KW-0627">Porphyrin biosynthesis</keyword>
<keyword id="KW-0949">S-adenosyl-L-methionine</keyword>
<keyword id="KW-0808">Transferase</keyword>
<reference key="1">
    <citation type="journal article" date="2005" name="J. Bacteriol.">
        <title>Whole-genome sequence analysis of Pseudomonas syringae pv. phaseolicola 1448A reveals divergence among pathovars in genes involved in virulence and transposition.</title>
        <authorList>
            <person name="Joardar V."/>
            <person name="Lindeberg M."/>
            <person name="Jackson R.W."/>
            <person name="Selengut J."/>
            <person name="Dodson R."/>
            <person name="Brinkac L.M."/>
            <person name="Daugherty S.C."/>
            <person name="DeBoy R.T."/>
            <person name="Durkin A.S."/>
            <person name="Gwinn Giglio M."/>
            <person name="Madupu R."/>
            <person name="Nelson W.C."/>
            <person name="Rosovitz M.J."/>
            <person name="Sullivan S.A."/>
            <person name="Crabtree J."/>
            <person name="Creasy T."/>
            <person name="Davidsen T.M."/>
            <person name="Haft D.H."/>
            <person name="Zafar N."/>
            <person name="Zhou L."/>
            <person name="Halpin R."/>
            <person name="Holley T."/>
            <person name="Khouri H.M."/>
            <person name="Feldblyum T.V."/>
            <person name="White O."/>
            <person name="Fraser C.M."/>
            <person name="Chatterjee A.K."/>
            <person name="Cartinhour S."/>
            <person name="Schneider D."/>
            <person name="Mansfield J.W."/>
            <person name="Collmer A."/>
            <person name="Buell R."/>
        </authorList>
    </citation>
    <scope>NUCLEOTIDE SEQUENCE [LARGE SCALE GENOMIC DNA]</scope>
    <source>
        <strain>1448A / Race 6</strain>
    </source>
</reference>
<gene>
    <name evidence="1" type="primary">cysG</name>
    <name type="ordered locus">PSPPH_3088</name>
</gene>
<feature type="chain" id="PRO_0000330543" description="Siroheme synthase">
    <location>
        <begin position="1"/>
        <end position="464"/>
    </location>
</feature>
<feature type="region of interest" description="Precorrin-2 dehydrogenase /sirohydrochlorin ferrochelatase" evidence="1">
    <location>
        <begin position="1"/>
        <end position="203"/>
    </location>
</feature>
<feature type="region of interest" description="Uroporphyrinogen-III C-methyltransferase" evidence="1">
    <location>
        <begin position="216"/>
        <end position="464"/>
    </location>
</feature>
<feature type="active site" description="Proton acceptor" evidence="1">
    <location>
        <position position="248"/>
    </location>
</feature>
<feature type="active site" description="Proton donor" evidence="1">
    <location>
        <position position="270"/>
    </location>
</feature>
<feature type="binding site" evidence="1">
    <location>
        <begin position="22"/>
        <end position="23"/>
    </location>
    <ligand>
        <name>NAD(+)</name>
        <dbReference type="ChEBI" id="CHEBI:57540"/>
    </ligand>
</feature>
<feature type="binding site" evidence="1">
    <location>
        <begin position="43"/>
        <end position="44"/>
    </location>
    <ligand>
        <name>NAD(+)</name>
        <dbReference type="ChEBI" id="CHEBI:57540"/>
    </ligand>
</feature>
<feature type="binding site" evidence="1">
    <location>
        <position position="225"/>
    </location>
    <ligand>
        <name>S-adenosyl-L-methionine</name>
        <dbReference type="ChEBI" id="CHEBI:59789"/>
    </ligand>
</feature>
<feature type="binding site" evidence="1">
    <location>
        <begin position="301"/>
        <end position="303"/>
    </location>
    <ligand>
        <name>S-adenosyl-L-methionine</name>
        <dbReference type="ChEBI" id="CHEBI:59789"/>
    </ligand>
</feature>
<feature type="binding site" evidence="1">
    <location>
        <position position="306"/>
    </location>
    <ligand>
        <name>S-adenosyl-L-methionine</name>
        <dbReference type="ChEBI" id="CHEBI:59789"/>
    </ligand>
</feature>
<feature type="binding site" evidence="1">
    <location>
        <begin position="331"/>
        <end position="332"/>
    </location>
    <ligand>
        <name>S-adenosyl-L-methionine</name>
        <dbReference type="ChEBI" id="CHEBI:59789"/>
    </ligand>
</feature>
<feature type="binding site" evidence="1">
    <location>
        <position position="383"/>
    </location>
    <ligand>
        <name>S-adenosyl-L-methionine</name>
        <dbReference type="ChEBI" id="CHEBI:59789"/>
    </ligand>
</feature>
<feature type="binding site" evidence="1">
    <location>
        <position position="412"/>
    </location>
    <ligand>
        <name>S-adenosyl-L-methionine</name>
        <dbReference type="ChEBI" id="CHEBI:59789"/>
    </ligand>
</feature>
<feature type="modified residue" description="Phosphoserine" evidence="1">
    <location>
        <position position="128"/>
    </location>
</feature>
<proteinExistence type="inferred from homology"/>